<gene>
    <name evidence="1" type="primary">secB</name>
    <name type="ordered locus">APP7_1569</name>
</gene>
<proteinExistence type="inferred from homology"/>
<keyword id="KW-0143">Chaperone</keyword>
<keyword id="KW-0963">Cytoplasm</keyword>
<keyword id="KW-0653">Protein transport</keyword>
<keyword id="KW-0811">Translocation</keyword>
<keyword id="KW-0813">Transport</keyword>
<dbReference type="EMBL" id="CP001091">
    <property type="protein sequence ID" value="ACE62221.1"/>
    <property type="molecule type" value="Genomic_DNA"/>
</dbReference>
<dbReference type="RefSeq" id="WP_005605421.1">
    <property type="nucleotide sequence ID" value="NC_010939.1"/>
</dbReference>
<dbReference type="SMR" id="B3GYJ0"/>
<dbReference type="KEGG" id="apa:APP7_1569"/>
<dbReference type="HOGENOM" id="CLU_111574_1_0_6"/>
<dbReference type="Proteomes" id="UP000001226">
    <property type="component" value="Chromosome"/>
</dbReference>
<dbReference type="GO" id="GO:0005737">
    <property type="term" value="C:cytoplasm"/>
    <property type="evidence" value="ECO:0007669"/>
    <property type="project" value="UniProtKB-SubCell"/>
</dbReference>
<dbReference type="GO" id="GO:0051082">
    <property type="term" value="F:unfolded protein binding"/>
    <property type="evidence" value="ECO:0007669"/>
    <property type="project" value="InterPro"/>
</dbReference>
<dbReference type="GO" id="GO:0006457">
    <property type="term" value="P:protein folding"/>
    <property type="evidence" value="ECO:0007669"/>
    <property type="project" value="UniProtKB-UniRule"/>
</dbReference>
<dbReference type="GO" id="GO:0051262">
    <property type="term" value="P:protein tetramerization"/>
    <property type="evidence" value="ECO:0007669"/>
    <property type="project" value="InterPro"/>
</dbReference>
<dbReference type="GO" id="GO:0015031">
    <property type="term" value="P:protein transport"/>
    <property type="evidence" value="ECO:0007669"/>
    <property type="project" value="UniProtKB-UniRule"/>
</dbReference>
<dbReference type="CDD" id="cd00557">
    <property type="entry name" value="Translocase_SecB"/>
    <property type="match status" value="1"/>
</dbReference>
<dbReference type="Gene3D" id="3.10.420.10">
    <property type="entry name" value="SecB-like"/>
    <property type="match status" value="1"/>
</dbReference>
<dbReference type="HAMAP" id="MF_00821">
    <property type="entry name" value="SecB"/>
    <property type="match status" value="1"/>
</dbReference>
<dbReference type="InterPro" id="IPR003708">
    <property type="entry name" value="SecB"/>
</dbReference>
<dbReference type="InterPro" id="IPR035958">
    <property type="entry name" value="SecB-like_sf"/>
</dbReference>
<dbReference type="NCBIfam" id="NF004393">
    <property type="entry name" value="PRK05751.1-4"/>
    <property type="match status" value="1"/>
</dbReference>
<dbReference type="NCBIfam" id="TIGR00809">
    <property type="entry name" value="secB"/>
    <property type="match status" value="1"/>
</dbReference>
<dbReference type="PANTHER" id="PTHR36918">
    <property type="match status" value="1"/>
</dbReference>
<dbReference type="PANTHER" id="PTHR36918:SF1">
    <property type="entry name" value="PROTEIN-EXPORT PROTEIN SECB"/>
    <property type="match status" value="1"/>
</dbReference>
<dbReference type="Pfam" id="PF02556">
    <property type="entry name" value="SecB"/>
    <property type="match status" value="1"/>
</dbReference>
<dbReference type="PRINTS" id="PR01594">
    <property type="entry name" value="SECBCHAPRONE"/>
</dbReference>
<dbReference type="SUPFAM" id="SSF54611">
    <property type="entry name" value="SecB-like"/>
    <property type="match status" value="1"/>
</dbReference>
<comment type="function">
    <text evidence="1">One of the proteins required for the normal export of preproteins out of the cell cytoplasm. It is a molecular chaperone that binds to a subset of precursor proteins, maintaining them in a translocation-competent state. It also specifically binds to its receptor SecA.</text>
</comment>
<comment type="subunit">
    <text evidence="1">Homotetramer, a dimer of dimers. One homotetramer interacts with 1 SecA dimer.</text>
</comment>
<comment type="subcellular location">
    <subcellularLocation>
        <location evidence="1">Cytoplasm</location>
    </subcellularLocation>
</comment>
<comment type="similarity">
    <text evidence="1">Belongs to the SecB family.</text>
</comment>
<name>SECB_ACTP7</name>
<reference key="1">
    <citation type="submission" date="2008-06" db="EMBL/GenBank/DDBJ databases">
        <title>Genome and proteome analysis of A. pleuropneumoniae serotype 7.</title>
        <authorList>
            <person name="Linke B."/>
            <person name="Buettner F."/>
            <person name="Martinez-Arias R."/>
            <person name="Goesmann A."/>
            <person name="Baltes N."/>
            <person name="Tegetmeyer H."/>
            <person name="Singh M."/>
            <person name="Gerlach G.F."/>
        </authorList>
    </citation>
    <scope>NUCLEOTIDE SEQUENCE [LARGE SCALE GENOMIC DNA]</scope>
    <source>
        <strain>AP76</strain>
    </source>
</reference>
<sequence length="166" mass="18738">MTEENQVTAQEEAQTPFELQIQRIYIKDVSFEAPNLPTIFHQEWKPQLGFELDTETKQLDEDLYEVVLHINVSTTLEDSGDTAFICEVKQAGVFTIKGIEGIQLAHCLASQCPNVLYPYARELISSLVNRGTFPALNLSPVNFDALFMDYLQRQEAEQNAEAPAVN</sequence>
<protein>
    <recommendedName>
        <fullName evidence="1">Protein-export protein SecB</fullName>
    </recommendedName>
</protein>
<accession>B3GYJ0</accession>
<organism>
    <name type="scientific">Actinobacillus pleuropneumoniae serotype 7 (strain AP76)</name>
    <dbReference type="NCBI Taxonomy" id="537457"/>
    <lineage>
        <taxon>Bacteria</taxon>
        <taxon>Pseudomonadati</taxon>
        <taxon>Pseudomonadota</taxon>
        <taxon>Gammaproteobacteria</taxon>
        <taxon>Pasteurellales</taxon>
        <taxon>Pasteurellaceae</taxon>
        <taxon>Actinobacillus</taxon>
    </lineage>
</organism>
<feature type="chain" id="PRO_1000134358" description="Protein-export protein SecB">
    <location>
        <begin position="1"/>
        <end position="166"/>
    </location>
</feature>
<evidence type="ECO:0000255" key="1">
    <source>
        <dbReference type="HAMAP-Rule" id="MF_00821"/>
    </source>
</evidence>